<proteinExistence type="inferred from homology"/>
<keyword id="KW-0963">Cytoplasm</keyword>
<keyword id="KW-0255">Endonuclease</keyword>
<keyword id="KW-0378">Hydrolase</keyword>
<keyword id="KW-0479">Metal-binding</keyword>
<keyword id="KW-0540">Nuclease</keyword>
<keyword id="KW-0690">Ribosome biogenesis</keyword>
<keyword id="KW-0698">rRNA processing</keyword>
<keyword id="KW-0862">Zinc</keyword>
<evidence type="ECO:0000255" key="1">
    <source>
        <dbReference type="HAMAP-Rule" id="MF_00009"/>
    </source>
</evidence>
<organism>
    <name type="scientific">Mesorhizobium japonicum (strain LMG 29417 / CECT 9101 / MAFF 303099)</name>
    <name type="common">Mesorhizobium loti (strain MAFF 303099)</name>
    <dbReference type="NCBI Taxonomy" id="266835"/>
    <lineage>
        <taxon>Bacteria</taxon>
        <taxon>Pseudomonadati</taxon>
        <taxon>Pseudomonadota</taxon>
        <taxon>Alphaproteobacteria</taxon>
        <taxon>Hyphomicrobiales</taxon>
        <taxon>Phyllobacteriaceae</taxon>
        <taxon>Mesorhizobium</taxon>
    </lineage>
</organism>
<sequence length="166" mass="17685">MPEDNLSGDGGPPVDIDISVEAGDWPDEAGLARLVDRAVDAAFAETGVTGRSELSVVFSDDAHIRTLNAEWRGKDKPTNVLSFPAFPFAQGGPLPPMLGDIVLAAETVSREAALEDKPVQNHITHLVIHGLLHLLGHDHETDAEAEAMEAIERAALARLAIPDPYA</sequence>
<name>YBEY_RHILO</name>
<accession>Q98BK1</accession>
<gene>
    <name evidence="1" type="primary">ybeY</name>
    <name type="ordered locus">mlr5536</name>
</gene>
<feature type="chain" id="PRO_0000102514" description="Endoribonuclease YbeY">
    <location>
        <begin position="1"/>
        <end position="166"/>
    </location>
</feature>
<feature type="binding site" evidence="1">
    <location>
        <position position="129"/>
    </location>
    <ligand>
        <name>Zn(2+)</name>
        <dbReference type="ChEBI" id="CHEBI:29105"/>
        <note>catalytic</note>
    </ligand>
</feature>
<feature type="binding site" evidence="1">
    <location>
        <position position="133"/>
    </location>
    <ligand>
        <name>Zn(2+)</name>
        <dbReference type="ChEBI" id="CHEBI:29105"/>
        <note>catalytic</note>
    </ligand>
</feature>
<feature type="binding site" evidence="1">
    <location>
        <position position="139"/>
    </location>
    <ligand>
        <name>Zn(2+)</name>
        <dbReference type="ChEBI" id="CHEBI:29105"/>
        <note>catalytic</note>
    </ligand>
</feature>
<protein>
    <recommendedName>
        <fullName evidence="1">Endoribonuclease YbeY</fullName>
        <ecNumber evidence="1">3.1.-.-</ecNumber>
    </recommendedName>
</protein>
<reference key="1">
    <citation type="journal article" date="2000" name="DNA Res.">
        <title>Complete genome structure of the nitrogen-fixing symbiotic bacterium Mesorhizobium loti.</title>
        <authorList>
            <person name="Kaneko T."/>
            <person name="Nakamura Y."/>
            <person name="Sato S."/>
            <person name="Asamizu E."/>
            <person name="Kato T."/>
            <person name="Sasamoto S."/>
            <person name="Watanabe A."/>
            <person name="Idesawa K."/>
            <person name="Ishikawa A."/>
            <person name="Kawashima K."/>
            <person name="Kimura T."/>
            <person name="Kishida Y."/>
            <person name="Kiyokawa C."/>
            <person name="Kohara M."/>
            <person name="Matsumoto M."/>
            <person name="Matsuno A."/>
            <person name="Mochizuki Y."/>
            <person name="Nakayama S."/>
            <person name="Nakazaki N."/>
            <person name="Shimpo S."/>
            <person name="Sugimoto M."/>
            <person name="Takeuchi C."/>
            <person name="Yamada M."/>
            <person name="Tabata S."/>
        </authorList>
    </citation>
    <scope>NUCLEOTIDE SEQUENCE [LARGE SCALE GENOMIC DNA]</scope>
    <source>
        <strain>LMG 29417 / CECT 9101 / MAFF 303099</strain>
    </source>
</reference>
<dbReference type="EC" id="3.1.-.-" evidence="1"/>
<dbReference type="EMBL" id="BA000012">
    <property type="protein sequence ID" value="BAB51971.1"/>
    <property type="molecule type" value="Genomic_DNA"/>
</dbReference>
<dbReference type="RefSeq" id="WP_010913309.1">
    <property type="nucleotide sequence ID" value="NC_002678.2"/>
</dbReference>
<dbReference type="SMR" id="Q98BK1"/>
<dbReference type="GeneID" id="66680346"/>
<dbReference type="KEGG" id="mlo:mlr5536"/>
<dbReference type="eggNOG" id="COG0319">
    <property type="taxonomic scope" value="Bacteria"/>
</dbReference>
<dbReference type="HOGENOM" id="CLU_106710_0_0_5"/>
<dbReference type="Proteomes" id="UP000000552">
    <property type="component" value="Chromosome"/>
</dbReference>
<dbReference type="GO" id="GO:0005737">
    <property type="term" value="C:cytoplasm"/>
    <property type="evidence" value="ECO:0007669"/>
    <property type="project" value="UniProtKB-SubCell"/>
</dbReference>
<dbReference type="GO" id="GO:0004222">
    <property type="term" value="F:metalloendopeptidase activity"/>
    <property type="evidence" value="ECO:0007669"/>
    <property type="project" value="InterPro"/>
</dbReference>
<dbReference type="GO" id="GO:0004521">
    <property type="term" value="F:RNA endonuclease activity"/>
    <property type="evidence" value="ECO:0007669"/>
    <property type="project" value="UniProtKB-UniRule"/>
</dbReference>
<dbReference type="GO" id="GO:0008270">
    <property type="term" value="F:zinc ion binding"/>
    <property type="evidence" value="ECO:0007669"/>
    <property type="project" value="UniProtKB-UniRule"/>
</dbReference>
<dbReference type="GO" id="GO:0006364">
    <property type="term" value="P:rRNA processing"/>
    <property type="evidence" value="ECO:0007669"/>
    <property type="project" value="UniProtKB-UniRule"/>
</dbReference>
<dbReference type="Gene3D" id="3.40.390.30">
    <property type="entry name" value="Metalloproteases ('zincins'), catalytic domain"/>
    <property type="match status" value="1"/>
</dbReference>
<dbReference type="HAMAP" id="MF_00009">
    <property type="entry name" value="Endoribonucl_YbeY"/>
    <property type="match status" value="1"/>
</dbReference>
<dbReference type="InterPro" id="IPR023091">
    <property type="entry name" value="MetalPrtase_cat_dom_sf_prd"/>
</dbReference>
<dbReference type="InterPro" id="IPR002036">
    <property type="entry name" value="YbeY"/>
</dbReference>
<dbReference type="InterPro" id="IPR020549">
    <property type="entry name" value="YbeY_CS"/>
</dbReference>
<dbReference type="NCBIfam" id="TIGR00043">
    <property type="entry name" value="rRNA maturation RNase YbeY"/>
    <property type="match status" value="1"/>
</dbReference>
<dbReference type="PANTHER" id="PTHR46986">
    <property type="entry name" value="ENDORIBONUCLEASE YBEY, CHLOROPLASTIC"/>
    <property type="match status" value="1"/>
</dbReference>
<dbReference type="PANTHER" id="PTHR46986:SF1">
    <property type="entry name" value="ENDORIBONUCLEASE YBEY, CHLOROPLASTIC"/>
    <property type="match status" value="1"/>
</dbReference>
<dbReference type="Pfam" id="PF02130">
    <property type="entry name" value="YbeY"/>
    <property type="match status" value="1"/>
</dbReference>
<dbReference type="SUPFAM" id="SSF55486">
    <property type="entry name" value="Metalloproteases ('zincins'), catalytic domain"/>
    <property type="match status" value="1"/>
</dbReference>
<dbReference type="PROSITE" id="PS01306">
    <property type="entry name" value="UPF0054"/>
    <property type="match status" value="1"/>
</dbReference>
<comment type="function">
    <text evidence="1">Single strand-specific metallo-endoribonuclease involved in late-stage 70S ribosome quality control and in maturation of the 3' terminus of the 16S rRNA.</text>
</comment>
<comment type="cofactor">
    <cofactor evidence="1">
        <name>Zn(2+)</name>
        <dbReference type="ChEBI" id="CHEBI:29105"/>
    </cofactor>
    <text evidence="1">Binds 1 zinc ion.</text>
</comment>
<comment type="subcellular location">
    <subcellularLocation>
        <location evidence="1">Cytoplasm</location>
    </subcellularLocation>
</comment>
<comment type="similarity">
    <text evidence="1">Belongs to the endoribonuclease YbeY family.</text>
</comment>